<keyword id="KW-0067">ATP-binding</keyword>
<keyword id="KW-0963">Cytoplasm</keyword>
<keyword id="KW-0418">Kinase</keyword>
<keyword id="KW-0547">Nucleotide-binding</keyword>
<keyword id="KW-0665">Pyrimidine biosynthesis</keyword>
<keyword id="KW-1185">Reference proteome</keyword>
<keyword id="KW-0808">Transferase</keyword>
<reference key="1">
    <citation type="submission" date="2006-10" db="EMBL/GenBank/DDBJ databases">
        <title>Complete sequence of Methanosaeta thermophila PT.</title>
        <authorList>
            <consortium name="US DOE Joint Genome Institute"/>
            <person name="Copeland A."/>
            <person name="Lucas S."/>
            <person name="Lapidus A."/>
            <person name="Barry K."/>
            <person name="Detter J.C."/>
            <person name="Glavina del Rio T."/>
            <person name="Hammon N."/>
            <person name="Israni S."/>
            <person name="Pitluck S."/>
            <person name="Chain P."/>
            <person name="Malfatti S."/>
            <person name="Shin M."/>
            <person name="Vergez L."/>
            <person name="Schmutz J."/>
            <person name="Larimer F."/>
            <person name="Land M."/>
            <person name="Hauser L."/>
            <person name="Kyrpides N."/>
            <person name="Kim E."/>
            <person name="Smith K.S."/>
            <person name="Ingram-Smith C."/>
            <person name="Richardson P."/>
        </authorList>
    </citation>
    <scope>NUCLEOTIDE SEQUENCE [LARGE SCALE GENOMIC DNA]</scope>
    <source>
        <strain>DSM 6194 / JCM 14653 / NBRC 101360 / PT</strain>
    </source>
</reference>
<accession>A0B8B0</accession>
<comment type="function">
    <text evidence="1">Catalyzes the reversible phosphorylation of UMP to UDP.</text>
</comment>
<comment type="catalytic activity">
    <reaction evidence="1">
        <text>UMP + ATP = UDP + ADP</text>
        <dbReference type="Rhea" id="RHEA:24400"/>
        <dbReference type="ChEBI" id="CHEBI:30616"/>
        <dbReference type="ChEBI" id="CHEBI:57865"/>
        <dbReference type="ChEBI" id="CHEBI:58223"/>
        <dbReference type="ChEBI" id="CHEBI:456216"/>
        <dbReference type="EC" id="2.7.4.22"/>
    </reaction>
</comment>
<comment type="activity regulation">
    <text evidence="1">Inhibited by UTP.</text>
</comment>
<comment type="pathway">
    <text evidence="1">Pyrimidine metabolism; CTP biosynthesis via de novo pathway; UDP from UMP (UMPK route): step 1/1.</text>
</comment>
<comment type="subunit">
    <text evidence="1">Homohexamer.</text>
</comment>
<comment type="subcellular location">
    <subcellularLocation>
        <location evidence="1">Cytoplasm</location>
    </subcellularLocation>
</comment>
<comment type="similarity">
    <text evidence="1">Belongs to the UMP kinase family.</text>
</comment>
<organism>
    <name type="scientific">Methanothrix thermoacetophila (strain DSM 6194 / JCM 14653 / NBRC 101360 / PT)</name>
    <name type="common">Methanosaeta thermophila</name>
    <dbReference type="NCBI Taxonomy" id="349307"/>
    <lineage>
        <taxon>Archaea</taxon>
        <taxon>Methanobacteriati</taxon>
        <taxon>Methanobacteriota</taxon>
        <taxon>Stenosarchaea group</taxon>
        <taxon>Methanomicrobia</taxon>
        <taxon>Methanotrichales</taxon>
        <taxon>Methanotrichaceae</taxon>
        <taxon>Methanothrix</taxon>
    </lineage>
</organism>
<evidence type="ECO:0000255" key="1">
    <source>
        <dbReference type="HAMAP-Rule" id="MF_01220"/>
    </source>
</evidence>
<proteinExistence type="inferred from homology"/>
<feature type="chain" id="PRO_1000053959" description="Uridylate kinase">
    <location>
        <begin position="1"/>
        <end position="223"/>
    </location>
</feature>
<feature type="binding site" evidence="1">
    <location>
        <begin position="9"/>
        <end position="10"/>
    </location>
    <ligand>
        <name>ATP</name>
        <dbReference type="ChEBI" id="CHEBI:30616"/>
    </ligand>
</feature>
<feature type="binding site" evidence="1">
    <location>
        <position position="42"/>
    </location>
    <ligand>
        <name>UMP</name>
        <dbReference type="ChEBI" id="CHEBI:57865"/>
    </ligand>
</feature>
<feature type="binding site" evidence="1">
    <location>
        <position position="43"/>
    </location>
    <ligand>
        <name>ATP</name>
        <dbReference type="ChEBI" id="CHEBI:30616"/>
    </ligand>
</feature>
<feature type="binding site" evidence="1">
    <location>
        <position position="47"/>
    </location>
    <ligand>
        <name>ATP</name>
        <dbReference type="ChEBI" id="CHEBI:30616"/>
    </ligand>
</feature>
<feature type="binding site" evidence="1">
    <location>
        <position position="64"/>
    </location>
    <ligand>
        <name>UMP</name>
        <dbReference type="ChEBI" id="CHEBI:57865"/>
    </ligand>
</feature>
<feature type="binding site" evidence="1">
    <location>
        <begin position="112"/>
        <end position="118"/>
    </location>
    <ligand>
        <name>UMP</name>
        <dbReference type="ChEBI" id="CHEBI:57865"/>
    </ligand>
</feature>
<feature type="binding site" evidence="1">
    <location>
        <position position="138"/>
    </location>
    <ligand>
        <name>ATP</name>
        <dbReference type="ChEBI" id="CHEBI:30616"/>
    </ligand>
</feature>
<feature type="binding site" evidence="1">
    <location>
        <position position="144"/>
    </location>
    <ligand>
        <name>ATP</name>
        <dbReference type="ChEBI" id="CHEBI:30616"/>
    </ligand>
</feature>
<feature type="binding site" evidence="1">
    <location>
        <position position="147"/>
    </location>
    <ligand>
        <name>ATP</name>
        <dbReference type="ChEBI" id="CHEBI:30616"/>
    </ligand>
</feature>
<sequence length="223" mass="23333">MIVVYSLGGSVLAAQDSAGLKRYAEALRTIARDNQVYVVVGGGALAREYIGKARDVGASEALCDSIGILATRMNAALLAAALDGSAPFRVPESYDDAIEASKTYRMVVMGGVSPGQTTDAVAALLAEYTRATLLVIATSVNGVYTSDPEKDPGAVKIPRMGAKDLSRMMSQIELKAGSKSPVDPLAAKIIERSHIPTVVVDGRNVANLIRAIDGTHDGTEIRS</sequence>
<name>PYRH_METTP</name>
<dbReference type="EC" id="2.7.4.22" evidence="1"/>
<dbReference type="EMBL" id="CP000477">
    <property type="protein sequence ID" value="ABK14934.1"/>
    <property type="molecule type" value="Genomic_DNA"/>
</dbReference>
<dbReference type="RefSeq" id="WP_011696327.1">
    <property type="nucleotide sequence ID" value="NC_008553.1"/>
</dbReference>
<dbReference type="SMR" id="A0B8B0"/>
<dbReference type="STRING" id="349307.Mthe_1152"/>
<dbReference type="GeneID" id="4462955"/>
<dbReference type="KEGG" id="mtp:Mthe_1152"/>
<dbReference type="HOGENOM" id="CLU_079546_0_0_2"/>
<dbReference type="OrthoDB" id="372251at2157"/>
<dbReference type="UniPathway" id="UPA00159">
    <property type="reaction ID" value="UER00275"/>
</dbReference>
<dbReference type="Proteomes" id="UP000000674">
    <property type="component" value="Chromosome"/>
</dbReference>
<dbReference type="GO" id="GO:0005737">
    <property type="term" value="C:cytoplasm"/>
    <property type="evidence" value="ECO:0007669"/>
    <property type="project" value="UniProtKB-SubCell"/>
</dbReference>
<dbReference type="GO" id="GO:0005524">
    <property type="term" value="F:ATP binding"/>
    <property type="evidence" value="ECO:0007669"/>
    <property type="project" value="UniProtKB-KW"/>
</dbReference>
<dbReference type="GO" id="GO:0033862">
    <property type="term" value="F:UMP kinase activity"/>
    <property type="evidence" value="ECO:0007669"/>
    <property type="project" value="UniProtKB-EC"/>
</dbReference>
<dbReference type="GO" id="GO:0044210">
    <property type="term" value="P:'de novo' CTP biosynthetic process"/>
    <property type="evidence" value="ECO:0007669"/>
    <property type="project" value="UniProtKB-UniRule"/>
</dbReference>
<dbReference type="GO" id="GO:0006225">
    <property type="term" value="P:UDP biosynthetic process"/>
    <property type="evidence" value="ECO:0007669"/>
    <property type="project" value="TreeGrafter"/>
</dbReference>
<dbReference type="CDD" id="cd04253">
    <property type="entry name" value="AAK_UMPK-PyrH-Pf"/>
    <property type="match status" value="1"/>
</dbReference>
<dbReference type="Gene3D" id="3.40.1160.10">
    <property type="entry name" value="Acetylglutamate kinase-like"/>
    <property type="match status" value="1"/>
</dbReference>
<dbReference type="HAMAP" id="MF_01220_A">
    <property type="entry name" value="PyrH_A"/>
    <property type="match status" value="1"/>
</dbReference>
<dbReference type="InterPro" id="IPR036393">
    <property type="entry name" value="AceGlu_kinase-like_sf"/>
</dbReference>
<dbReference type="InterPro" id="IPR001048">
    <property type="entry name" value="Asp/Glu/Uridylate_kinase"/>
</dbReference>
<dbReference type="InterPro" id="IPR011817">
    <property type="entry name" value="Uridylate_kinase"/>
</dbReference>
<dbReference type="InterPro" id="IPR011818">
    <property type="entry name" value="Uridylate_kinase_arch/spir"/>
</dbReference>
<dbReference type="NCBIfam" id="TIGR02076">
    <property type="entry name" value="pyrH_arch"/>
    <property type="match status" value="1"/>
</dbReference>
<dbReference type="PANTHER" id="PTHR42833">
    <property type="entry name" value="URIDYLATE KINASE"/>
    <property type="match status" value="1"/>
</dbReference>
<dbReference type="PANTHER" id="PTHR42833:SF4">
    <property type="entry name" value="URIDYLATE KINASE PUMPKIN, CHLOROPLASTIC"/>
    <property type="match status" value="1"/>
</dbReference>
<dbReference type="Pfam" id="PF00696">
    <property type="entry name" value="AA_kinase"/>
    <property type="match status" value="1"/>
</dbReference>
<dbReference type="PIRSF" id="PIRSF005650">
    <property type="entry name" value="Uridylate_kin"/>
    <property type="match status" value="1"/>
</dbReference>
<dbReference type="SUPFAM" id="SSF53633">
    <property type="entry name" value="Carbamate kinase-like"/>
    <property type="match status" value="1"/>
</dbReference>
<gene>
    <name evidence="1" type="primary">pyrH</name>
    <name type="ordered locus">Mthe_1152</name>
</gene>
<protein>
    <recommendedName>
        <fullName evidence="1">Uridylate kinase</fullName>
        <shortName evidence="1">UK</shortName>
        <ecNumber evidence="1">2.7.4.22</ecNumber>
    </recommendedName>
    <alternativeName>
        <fullName evidence="1">Uridine monophosphate kinase</fullName>
        <shortName evidence="1">UMP kinase</shortName>
        <shortName evidence="1">UMPK</shortName>
    </alternativeName>
</protein>